<dbReference type="EMBL" id="BA000033">
    <property type="protein sequence ID" value="BAB94126.1"/>
    <property type="molecule type" value="Genomic_DNA"/>
</dbReference>
<dbReference type="RefSeq" id="WP_001071606.1">
    <property type="nucleotide sequence ID" value="NC_003923.1"/>
</dbReference>
<dbReference type="SMR" id="Q7A1V3"/>
<dbReference type="GeneID" id="98344609"/>
<dbReference type="KEGG" id="sam:MW0261"/>
<dbReference type="HOGENOM" id="CLU_189011_2_0_9"/>
<dbReference type="GO" id="GO:0005737">
    <property type="term" value="C:cytoplasm"/>
    <property type="evidence" value="ECO:0007669"/>
    <property type="project" value="UniProtKB-SubCell"/>
</dbReference>
<dbReference type="Gene3D" id="3.10.20.90">
    <property type="entry name" value="Phosphatidylinositol 3-kinase Catalytic Subunit, Chain A, domain 1"/>
    <property type="match status" value="1"/>
</dbReference>
<dbReference type="InterPro" id="IPR014921">
    <property type="entry name" value="EsaB"/>
</dbReference>
<dbReference type="InterPro" id="IPR029071">
    <property type="entry name" value="Ubiquitin-like_domsf"/>
</dbReference>
<dbReference type="InterPro" id="IPR024962">
    <property type="entry name" value="YukD-like"/>
</dbReference>
<dbReference type="Pfam" id="PF08817">
    <property type="entry name" value="YukD"/>
    <property type="match status" value="1"/>
</dbReference>
<dbReference type="PIRSF" id="PIRSF037793">
    <property type="entry name" value="DUF_ubiquitin-like_YukD"/>
    <property type="match status" value="1"/>
</dbReference>
<dbReference type="SUPFAM" id="SSF54236">
    <property type="entry name" value="Ubiquitin-like"/>
    <property type="match status" value="1"/>
</dbReference>
<reference key="1">
    <citation type="journal article" date="2002" name="Lancet">
        <title>Genome and virulence determinants of high virulence community-acquired MRSA.</title>
        <authorList>
            <person name="Baba T."/>
            <person name="Takeuchi F."/>
            <person name="Kuroda M."/>
            <person name="Yuzawa H."/>
            <person name="Aoki K."/>
            <person name="Oguchi A."/>
            <person name="Nagai Y."/>
            <person name="Iwama N."/>
            <person name="Asano K."/>
            <person name="Naimi T."/>
            <person name="Kuroda H."/>
            <person name="Cui L."/>
            <person name="Yamamoto K."/>
            <person name="Hiramatsu K."/>
        </authorList>
    </citation>
    <scope>NUCLEOTIDE SEQUENCE [LARGE SCALE GENOMIC DNA]</scope>
    <source>
        <strain>MW2</strain>
    </source>
</reference>
<keyword id="KW-0963">Cytoplasm</keyword>
<keyword id="KW-0843">Virulence</keyword>
<proteinExistence type="inferred from homology"/>
<comment type="function">
    <text evidence="1">Seems to regulate secreted factors that contribute to the establishment of persistent infections in the host.</text>
</comment>
<comment type="subcellular location">
    <subcellularLocation>
        <location evidence="1">Cytoplasm</location>
    </subcellularLocation>
</comment>
<comment type="similarity">
    <text evidence="2">Belongs to the EsaB family.</text>
</comment>
<evidence type="ECO:0000250" key="1">
    <source>
        <dbReference type="UniProtKB" id="P0C050"/>
    </source>
</evidence>
<evidence type="ECO:0000305" key="2"/>
<sequence length="80" mass="9121">MNQHVKVTFDFTNYNYGTYDLAVPAYLPIKNLIALVLDSLDISIFDVNTQIKVMTKGQLLVENDRLIDYQIADGDILKLL</sequence>
<gene>
    <name evidence="1" type="primary">esaB</name>
    <name type="ordered locus">MW0261</name>
</gene>
<feature type="chain" id="PRO_0000087049" description="Type VII secretion system accessory factor EsaB">
    <location>
        <begin position="1"/>
        <end position="80"/>
    </location>
</feature>
<organism>
    <name type="scientific">Staphylococcus aureus (strain MW2)</name>
    <dbReference type="NCBI Taxonomy" id="196620"/>
    <lineage>
        <taxon>Bacteria</taxon>
        <taxon>Bacillati</taxon>
        <taxon>Bacillota</taxon>
        <taxon>Bacilli</taxon>
        <taxon>Bacillales</taxon>
        <taxon>Staphylococcaceae</taxon>
        <taxon>Staphylococcus</taxon>
    </lineage>
</organism>
<protein>
    <recommendedName>
        <fullName evidence="1">Type VII secretion system accessory factor EsaB</fullName>
    </recommendedName>
</protein>
<name>ESAB_STAAW</name>
<accession>Q7A1V3</accession>